<name>FIBB_PAPAN</name>
<comment type="function">
    <text evidence="1">Cleaved by the protease thrombin to yield monomers which, together with fibrinogen alpha (FGA) and fibrinogen gamma (FGG), polymerize to form an insoluble fibrin matrix. Fibrin has a major function in hemostasis as one of the primary components of blood clots. In addition, functions during the early stages of wound repair to stabilize the lesion and guide cell migration during re-epithelialization. Was originally thought to be essential for platelet aggregation, based on in vitro studies using anticoagulated blood. However subsequent studies have shown that it is not absolutely required for thrombus formation in vivo. Enhances expression of SELP in activated platelets. Maternal fibrinogen is essential for successful pregnancy. Fibrin deposition is also associated with infection, where it protects against IFNG-mediated hemorrhage. May also facilitate the antibacterial immune response via both innate and T-cell mediated pathways.</text>
</comment>
<comment type="subunit">
    <text evidence="2">Heterohexamer; disulfide linked. Contains 2 sets of 3 non-identical chains (alpha, beta and gamma). The 2 heterotrimers are in head to head conformation with the N-termini in a small central domain (By similarity).</text>
</comment>
<comment type="subcellular location">
    <subcellularLocation>
        <location>Secreted</location>
    </subcellularLocation>
</comment>
<comment type="domain">
    <text evidence="2">A long coiled coil structure formed by 3 polypeptide chains connects the central nodule to the C-terminal domains (distal nodules). The long C-terminal ends of the alpha chains fold back, contributing a fourth strand to the coiled coil structure.</text>
</comment>
<comment type="PTM">
    <text>Conversion of fibrinogen to fibrin is triggered by thrombin, which cleaves fibrinopeptides A and B from alpha and beta chains, and thus exposes the N-terminal polymerization sites responsible for the formation of the soft clot.</text>
</comment>
<keyword id="KW-1064">Adaptive immunity</keyword>
<keyword id="KW-0094">Blood coagulation</keyword>
<keyword id="KW-0175">Coiled coil</keyword>
<keyword id="KW-0903">Direct protein sequencing</keyword>
<keyword id="KW-1015">Disulfide bond</keyword>
<keyword id="KW-0356">Hemostasis</keyword>
<keyword id="KW-0391">Immunity</keyword>
<keyword id="KW-0399">Innate immunity</keyword>
<keyword id="KW-1185">Reference proteome</keyword>
<keyword id="KW-0964">Secreted</keyword>
<evidence type="ECO:0000250" key="1">
    <source>
        <dbReference type="UniProtKB" id="E9PV24"/>
    </source>
</evidence>
<evidence type="ECO:0000250" key="2">
    <source>
        <dbReference type="UniProtKB" id="P02675"/>
    </source>
</evidence>
<proteinExistence type="evidence at protein level"/>
<gene>
    <name type="primary">FGB</name>
</gene>
<feature type="peptide" id="PRO_0000009081" description="Fibrinopeptide B">
    <location>
        <begin position="1"/>
        <end position="9"/>
    </location>
</feature>
<feature type="non-terminal residue">
    <location>
        <position position="9"/>
    </location>
</feature>
<organism>
    <name type="scientific">Papio anubis</name>
    <name type="common">Olive baboon</name>
    <dbReference type="NCBI Taxonomy" id="9555"/>
    <lineage>
        <taxon>Eukaryota</taxon>
        <taxon>Metazoa</taxon>
        <taxon>Chordata</taxon>
        <taxon>Craniata</taxon>
        <taxon>Vertebrata</taxon>
        <taxon>Euteleostomi</taxon>
        <taxon>Mammalia</taxon>
        <taxon>Eutheria</taxon>
        <taxon>Euarchontoglires</taxon>
        <taxon>Primates</taxon>
        <taxon>Haplorrhini</taxon>
        <taxon>Catarrhini</taxon>
        <taxon>Cercopithecidae</taxon>
        <taxon>Cercopithecinae</taxon>
        <taxon>Papio</taxon>
    </lineage>
</organism>
<protein>
    <recommendedName>
        <fullName>Fibrinogen beta chain</fullName>
    </recommendedName>
    <component>
        <recommendedName>
            <fullName>Fibrinopeptide B</fullName>
        </recommendedName>
    </component>
</protein>
<sequence>NQEGLFRGR</sequence>
<reference key="1">
    <citation type="journal article" date="1983" name="J. Biochem.">
        <title>Fibrinopeptides A and B of baboons (Papio anubis, Papio hamadryas, and Theropithecus gelada): their amino acid sequences and evolutionary rates and a molecular phylogeny for the baboons.</title>
        <authorList>
            <person name="Nakamura S."/>
            <person name="Takenaka O."/>
            <person name="Takahashi K."/>
        </authorList>
    </citation>
    <scope>PROTEIN SEQUENCE</scope>
</reference>
<accession>P19344</accession>
<dbReference type="PIR" id="D28854">
    <property type="entry name" value="D28854"/>
</dbReference>
<dbReference type="Proteomes" id="UP000028761">
    <property type="component" value="Unplaced"/>
</dbReference>
<dbReference type="GO" id="GO:0005576">
    <property type="term" value="C:extracellular region"/>
    <property type="evidence" value="ECO:0007669"/>
    <property type="project" value="UniProtKB-SubCell"/>
</dbReference>
<dbReference type="GO" id="GO:0002250">
    <property type="term" value="P:adaptive immune response"/>
    <property type="evidence" value="ECO:0007669"/>
    <property type="project" value="UniProtKB-KW"/>
</dbReference>
<dbReference type="GO" id="GO:0007596">
    <property type="term" value="P:blood coagulation"/>
    <property type="evidence" value="ECO:0007669"/>
    <property type="project" value="UniProtKB-KW"/>
</dbReference>
<dbReference type="GO" id="GO:0045087">
    <property type="term" value="P:innate immune response"/>
    <property type="evidence" value="ECO:0007669"/>
    <property type="project" value="UniProtKB-KW"/>
</dbReference>